<sequence length="360" mass="38798">MRTELFDFDLPASSIALRPVSPRDAARMLVVRPGATLEDRAVRDLPALLQPGDQLVVNDTRVIAAQLTGRRIGRATEPRIEATLIKRLDGSRWQALVKPAKKLAEGDVVRFGHDGRVCLLGHLDATVEAKGDAGEVTLAFTFHGPALDQAIAELGATPLPPYIASKRTPDDQDAADYQTMFAANEGAVAAPTAGLHFTPELDAALKARGVTLHRLTLHVGAGTFLPVKVDDTAEHKMHAEWGTISEATADALNAARAQGGRIVAVGTTSLRLLESAAREDGTIAPFADETAIFITPGYRFRAVDALMTNFHLPRSTLFMLVSAFCGLETMQAAYRHAIDSGYRFYSYGDASLLFREPASR</sequence>
<organism>
    <name type="scientific">Rhodopseudomonas palustris (strain BisB5)</name>
    <dbReference type="NCBI Taxonomy" id="316057"/>
    <lineage>
        <taxon>Bacteria</taxon>
        <taxon>Pseudomonadati</taxon>
        <taxon>Pseudomonadota</taxon>
        <taxon>Alphaproteobacteria</taxon>
        <taxon>Hyphomicrobiales</taxon>
        <taxon>Nitrobacteraceae</taxon>
        <taxon>Rhodopseudomonas</taxon>
    </lineage>
</organism>
<feature type="chain" id="PRO_1000015257" description="S-adenosylmethionine:tRNA ribosyltransferase-isomerase">
    <location>
        <begin position="1"/>
        <end position="360"/>
    </location>
</feature>
<proteinExistence type="inferred from homology"/>
<protein>
    <recommendedName>
        <fullName evidence="1">S-adenosylmethionine:tRNA ribosyltransferase-isomerase</fullName>
        <ecNumber evidence="1">2.4.99.17</ecNumber>
    </recommendedName>
    <alternativeName>
        <fullName evidence="1">Queuosine biosynthesis protein QueA</fullName>
    </alternativeName>
</protein>
<evidence type="ECO:0000255" key="1">
    <source>
        <dbReference type="HAMAP-Rule" id="MF_00113"/>
    </source>
</evidence>
<comment type="function">
    <text evidence="1">Transfers and isomerizes the ribose moiety from AdoMet to the 7-aminomethyl group of 7-deazaguanine (preQ1-tRNA) to give epoxyqueuosine (oQ-tRNA).</text>
</comment>
<comment type="catalytic activity">
    <reaction evidence="1">
        <text>7-aminomethyl-7-carbaguanosine(34) in tRNA + S-adenosyl-L-methionine = epoxyqueuosine(34) in tRNA + adenine + L-methionine + 2 H(+)</text>
        <dbReference type="Rhea" id="RHEA:32155"/>
        <dbReference type="Rhea" id="RHEA-COMP:10342"/>
        <dbReference type="Rhea" id="RHEA-COMP:18582"/>
        <dbReference type="ChEBI" id="CHEBI:15378"/>
        <dbReference type="ChEBI" id="CHEBI:16708"/>
        <dbReference type="ChEBI" id="CHEBI:57844"/>
        <dbReference type="ChEBI" id="CHEBI:59789"/>
        <dbReference type="ChEBI" id="CHEBI:82833"/>
        <dbReference type="ChEBI" id="CHEBI:194443"/>
        <dbReference type="EC" id="2.4.99.17"/>
    </reaction>
</comment>
<comment type="pathway">
    <text evidence="1">tRNA modification; tRNA-queuosine biosynthesis.</text>
</comment>
<comment type="subunit">
    <text evidence="1">Monomer.</text>
</comment>
<comment type="subcellular location">
    <subcellularLocation>
        <location evidence="1">Cytoplasm</location>
    </subcellularLocation>
</comment>
<comment type="similarity">
    <text evidence="1">Belongs to the QueA family.</text>
</comment>
<accession>Q137A8</accession>
<gene>
    <name evidence="1" type="primary">queA</name>
    <name type="ordered locus">RPD_2602</name>
</gene>
<dbReference type="EC" id="2.4.99.17" evidence="1"/>
<dbReference type="EMBL" id="CP000283">
    <property type="protein sequence ID" value="ABE39831.1"/>
    <property type="molecule type" value="Genomic_DNA"/>
</dbReference>
<dbReference type="SMR" id="Q137A8"/>
<dbReference type="STRING" id="316057.RPD_2602"/>
<dbReference type="KEGG" id="rpd:RPD_2602"/>
<dbReference type="eggNOG" id="COG0809">
    <property type="taxonomic scope" value="Bacteria"/>
</dbReference>
<dbReference type="HOGENOM" id="CLU_039110_1_1_5"/>
<dbReference type="BioCyc" id="RPAL316057:RPD_RS13085-MONOMER"/>
<dbReference type="UniPathway" id="UPA00392"/>
<dbReference type="Proteomes" id="UP000001818">
    <property type="component" value="Chromosome"/>
</dbReference>
<dbReference type="GO" id="GO:0005737">
    <property type="term" value="C:cytoplasm"/>
    <property type="evidence" value="ECO:0007669"/>
    <property type="project" value="UniProtKB-SubCell"/>
</dbReference>
<dbReference type="GO" id="GO:0051075">
    <property type="term" value="F:S-adenosylmethionine:tRNA ribosyltransferase-isomerase activity"/>
    <property type="evidence" value="ECO:0007669"/>
    <property type="project" value="UniProtKB-EC"/>
</dbReference>
<dbReference type="GO" id="GO:0008616">
    <property type="term" value="P:queuosine biosynthetic process"/>
    <property type="evidence" value="ECO:0007669"/>
    <property type="project" value="UniProtKB-UniRule"/>
</dbReference>
<dbReference type="GO" id="GO:0002099">
    <property type="term" value="P:tRNA wobble guanine modification"/>
    <property type="evidence" value="ECO:0007669"/>
    <property type="project" value="TreeGrafter"/>
</dbReference>
<dbReference type="FunFam" id="3.40.1780.10:FF:000001">
    <property type="entry name" value="S-adenosylmethionine:tRNA ribosyltransferase-isomerase"/>
    <property type="match status" value="1"/>
</dbReference>
<dbReference type="Gene3D" id="2.40.10.240">
    <property type="entry name" value="QueA-like"/>
    <property type="match status" value="1"/>
</dbReference>
<dbReference type="Gene3D" id="3.40.1780.10">
    <property type="entry name" value="QueA-like"/>
    <property type="match status" value="1"/>
</dbReference>
<dbReference type="HAMAP" id="MF_00113">
    <property type="entry name" value="QueA"/>
    <property type="match status" value="1"/>
</dbReference>
<dbReference type="InterPro" id="IPR003699">
    <property type="entry name" value="QueA"/>
</dbReference>
<dbReference type="InterPro" id="IPR042118">
    <property type="entry name" value="QueA_dom1"/>
</dbReference>
<dbReference type="InterPro" id="IPR042119">
    <property type="entry name" value="QueA_dom2"/>
</dbReference>
<dbReference type="InterPro" id="IPR036100">
    <property type="entry name" value="QueA_sf"/>
</dbReference>
<dbReference type="NCBIfam" id="NF001140">
    <property type="entry name" value="PRK00147.1"/>
    <property type="match status" value="1"/>
</dbReference>
<dbReference type="NCBIfam" id="TIGR00113">
    <property type="entry name" value="queA"/>
    <property type="match status" value="1"/>
</dbReference>
<dbReference type="PANTHER" id="PTHR30307">
    <property type="entry name" value="S-ADENOSYLMETHIONINE:TRNA RIBOSYLTRANSFERASE-ISOMERASE"/>
    <property type="match status" value="1"/>
</dbReference>
<dbReference type="PANTHER" id="PTHR30307:SF0">
    <property type="entry name" value="S-ADENOSYLMETHIONINE:TRNA RIBOSYLTRANSFERASE-ISOMERASE"/>
    <property type="match status" value="1"/>
</dbReference>
<dbReference type="Pfam" id="PF02547">
    <property type="entry name" value="Queuosine_synth"/>
    <property type="match status" value="1"/>
</dbReference>
<dbReference type="SUPFAM" id="SSF111337">
    <property type="entry name" value="QueA-like"/>
    <property type="match status" value="1"/>
</dbReference>
<keyword id="KW-0963">Cytoplasm</keyword>
<keyword id="KW-0671">Queuosine biosynthesis</keyword>
<keyword id="KW-0949">S-adenosyl-L-methionine</keyword>
<keyword id="KW-0808">Transferase</keyword>
<name>QUEA_RHOPS</name>
<reference key="1">
    <citation type="submission" date="2006-03" db="EMBL/GenBank/DDBJ databases">
        <title>Complete sequence of Rhodopseudomonas palustris BisB5.</title>
        <authorList>
            <consortium name="US DOE Joint Genome Institute"/>
            <person name="Copeland A."/>
            <person name="Lucas S."/>
            <person name="Lapidus A."/>
            <person name="Barry K."/>
            <person name="Detter J.C."/>
            <person name="Glavina del Rio T."/>
            <person name="Hammon N."/>
            <person name="Israni S."/>
            <person name="Dalin E."/>
            <person name="Tice H."/>
            <person name="Pitluck S."/>
            <person name="Chain P."/>
            <person name="Malfatti S."/>
            <person name="Shin M."/>
            <person name="Vergez L."/>
            <person name="Schmutz J."/>
            <person name="Larimer F."/>
            <person name="Land M."/>
            <person name="Hauser L."/>
            <person name="Pelletier D.A."/>
            <person name="Kyrpides N."/>
            <person name="Lykidis A."/>
            <person name="Oda Y."/>
            <person name="Harwood C.S."/>
            <person name="Richardson P."/>
        </authorList>
    </citation>
    <scope>NUCLEOTIDE SEQUENCE [LARGE SCALE GENOMIC DNA]</scope>
    <source>
        <strain>BisB5</strain>
    </source>
</reference>